<name>GDA7_WHEAT</name>
<sequence length="313" mass="36118">MKTFLILALVATTATTAVRVPVPQLQPKNPSQQQPQEQVPLVQQQQFPGQQQQFPPQQPYPQPQPFPSQQPYLQLQPFPQPQPFLPQLPYPQPQSFPPQQPYPQQRPKYLQPQQPISQQQAQQQQQQQQQQQQQQQQQILQQILQQQLIPCRDVVLQQHNIAHASSQVLQQSTYQLLQQLCCQQLLQIPEQSRCQAIHNVVHAIIMHQQEQQQQLQQQQQQQLQQQQQQQQQQQQPSSQVSFQQPQQQYPSSQGSFQPSQQNPQAQGSVQPQQLPQFAEIRNLALQTLPAMCNVYIPPHCSTTIAPFGIFGTN</sequence>
<protein>
    <recommendedName>
        <fullName>Alpha/beta-gliadin clone PW8142</fullName>
    </recommendedName>
    <alternativeName>
        <fullName>Prolamin</fullName>
    </alternativeName>
</protein>
<organism>
    <name type="scientific">Triticum aestivum</name>
    <name type="common">Wheat</name>
    <dbReference type="NCBI Taxonomy" id="4565"/>
    <lineage>
        <taxon>Eukaryota</taxon>
        <taxon>Viridiplantae</taxon>
        <taxon>Streptophyta</taxon>
        <taxon>Embryophyta</taxon>
        <taxon>Tracheophyta</taxon>
        <taxon>Spermatophyta</taxon>
        <taxon>Magnoliopsida</taxon>
        <taxon>Liliopsida</taxon>
        <taxon>Poales</taxon>
        <taxon>Poaceae</taxon>
        <taxon>BOP clade</taxon>
        <taxon>Pooideae</taxon>
        <taxon>Triticodae</taxon>
        <taxon>Triticeae</taxon>
        <taxon>Triticinae</taxon>
        <taxon>Triticum</taxon>
    </lineage>
</organism>
<dbReference type="EMBL" id="K03075">
    <property type="protein sequence ID" value="AAA34279.1"/>
    <property type="molecule type" value="Genomic_DNA"/>
</dbReference>
<dbReference type="STRING" id="4565.P04727"/>
<dbReference type="Proteomes" id="UP000019116">
    <property type="component" value="Unplaced"/>
</dbReference>
<dbReference type="ExpressionAtlas" id="P04727">
    <property type="expression patterns" value="baseline and differential"/>
</dbReference>
<dbReference type="GO" id="GO:0045735">
    <property type="term" value="F:nutrient reservoir activity"/>
    <property type="evidence" value="ECO:0007669"/>
    <property type="project" value="UniProtKB-KW"/>
</dbReference>
<dbReference type="Gene3D" id="1.10.110.10">
    <property type="entry name" value="Plant lipid-transfer and hydrophobic proteins"/>
    <property type="match status" value="2"/>
</dbReference>
<dbReference type="InterPro" id="IPR036312">
    <property type="entry name" value="Bifun_inhib/LTP/seed_sf"/>
</dbReference>
<dbReference type="InterPro" id="IPR016140">
    <property type="entry name" value="Bifunc_inhib/LTP/seed_store"/>
</dbReference>
<dbReference type="InterPro" id="IPR001954">
    <property type="entry name" value="Glia_glutenin"/>
</dbReference>
<dbReference type="PANTHER" id="PTHR33454:SF7">
    <property type="entry name" value="ALPHA_BETA-GLIADIN MM1"/>
    <property type="match status" value="1"/>
</dbReference>
<dbReference type="PANTHER" id="PTHR33454">
    <property type="entry name" value="PROLAMIN PPROL 14P"/>
    <property type="match status" value="1"/>
</dbReference>
<dbReference type="PRINTS" id="PR00208">
    <property type="entry name" value="GLIADGLUTEN"/>
</dbReference>
<dbReference type="PRINTS" id="PR00209">
    <property type="entry name" value="GLIADIN"/>
</dbReference>
<dbReference type="SMART" id="SM00499">
    <property type="entry name" value="AAI"/>
    <property type="match status" value="1"/>
</dbReference>
<dbReference type="SUPFAM" id="SSF47699">
    <property type="entry name" value="Bifunctional inhibitor/lipid-transfer protein/seed storage 2S albumin"/>
    <property type="match status" value="1"/>
</dbReference>
<reference key="1">
    <citation type="journal article" date="1985" name="Nucleic Acids Res.">
        <title>Conservation and variability of wheat alpha/beta-gliadin genes.</title>
        <authorList>
            <person name="Sumner-Smith M."/>
            <person name="Rafalski J.A."/>
            <person name="Sugiyama T."/>
            <person name="Stoll M."/>
            <person name="Soell D."/>
        </authorList>
    </citation>
    <scope>NUCLEOTIDE SEQUENCE [GENOMIC DNA]</scope>
</reference>
<accession>P04727</accession>
<comment type="function">
    <text>Gliadin is the major seed storage protein in wheat.</text>
</comment>
<comment type="PTM">
    <text evidence="1">Substrate of transglutaminase.</text>
</comment>
<comment type="allergen">
    <text evidence="1">Causes an allergic reaction in human. Is the cause of the celiac disease, also known as celiac sprue or gluten-sensitive enteropathy (By similarity).</text>
</comment>
<comment type="miscellaneous">
    <text>The alpha/beta-gliadins can be divided into 5 homology classes. Sequence divergence between the classes is due to single base substitutions and to duplications or deletions within or near direct repeats. There are more than a 100 copies of the gene for alpha/beta-gliadin per haploid genome.</text>
</comment>
<comment type="similarity">
    <text evidence="3">Belongs to the gliadin/glutenin family.</text>
</comment>
<proteinExistence type="inferred from homology"/>
<evidence type="ECO:0000250" key="1"/>
<evidence type="ECO:0000256" key="2">
    <source>
        <dbReference type="SAM" id="MobiDB-lite"/>
    </source>
</evidence>
<evidence type="ECO:0000305" key="3"/>
<feature type="signal peptide">
    <location>
        <begin position="1"/>
        <end position="20"/>
    </location>
</feature>
<feature type="chain" id="PRO_0000032274" description="Alpha/beta-gliadin clone PW8142">
    <location>
        <begin position="21"/>
        <end position="313"/>
    </location>
</feature>
<feature type="region of interest" description="Disordered" evidence="2">
    <location>
        <begin position="22"/>
        <end position="122"/>
    </location>
</feature>
<feature type="region of interest" description="Disordered" evidence="2">
    <location>
        <begin position="234"/>
        <end position="272"/>
    </location>
</feature>
<feature type="compositionally biased region" description="Low complexity" evidence="2">
    <location>
        <begin position="22"/>
        <end position="55"/>
    </location>
</feature>
<feature type="compositionally biased region" description="Pro residues" evidence="2">
    <location>
        <begin position="56"/>
        <end position="68"/>
    </location>
</feature>
<feature type="compositionally biased region" description="Pro residues" evidence="2">
    <location>
        <begin position="78"/>
        <end position="101"/>
    </location>
</feature>
<feature type="compositionally biased region" description="Low complexity" evidence="2">
    <location>
        <begin position="102"/>
        <end position="122"/>
    </location>
</feature>
<feature type="compositionally biased region" description="Low complexity" evidence="2">
    <location>
        <begin position="234"/>
        <end position="264"/>
    </location>
</feature>
<keyword id="KW-0020">Allergen</keyword>
<keyword id="KW-1185">Reference proteome</keyword>
<keyword id="KW-0677">Repeat</keyword>
<keyword id="KW-0708">Seed storage protein</keyword>
<keyword id="KW-0732">Signal</keyword>
<keyword id="KW-0758">Storage protein</keyword>